<gene>
    <name evidence="1" type="primary">rplN</name>
    <name type="ordered locus">BA_0120</name>
    <name type="ordered locus">GBAA_0120</name>
    <name type="ordered locus">BAS0120</name>
</gene>
<comment type="function">
    <text evidence="1">Binds to 23S rRNA. Forms part of two intersubunit bridges in the 70S ribosome.</text>
</comment>
<comment type="subunit">
    <text evidence="1">Part of the 50S ribosomal subunit. Forms a cluster with proteins L3 and L19. In the 70S ribosome, L14 and L19 interact and together make contacts with the 16S rRNA in bridges B5 and B8.</text>
</comment>
<comment type="similarity">
    <text evidence="1">Belongs to the universal ribosomal protein uL14 family.</text>
</comment>
<evidence type="ECO:0000255" key="1">
    <source>
        <dbReference type="HAMAP-Rule" id="MF_01367"/>
    </source>
</evidence>
<evidence type="ECO:0000305" key="2"/>
<organism>
    <name type="scientific">Bacillus anthracis</name>
    <dbReference type="NCBI Taxonomy" id="1392"/>
    <lineage>
        <taxon>Bacteria</taxon>
        <taxon>Bacillati</taxon>
        <taxon>Bacillota</taxon>
        <taxon>Bacilli</taxon>
        <taxon>Bacillales</taxon>
        <taxon>Bacillaceae</taxon>
        <taxon>Bacillus</taxon>
        <taxon>Bacillus cereus group</taxon>
    </lineage>
</organism>
<sequence length="122" mass="13120">MIQQESRLKVADNSGARELLTIKVLGGSGRKYANIGDIIVATVKQATPGGVVKKGDVVKAVVVRTKSGARRPDGSYIKFDENAAVIIKDDKSPRGTRIFGPVARELRDSNFMKIVSLAPEVL</sequence>
<name>RL14_BACAN</name>
<protein>
    <recommendedName>
        <fullName evidence="1">Large ribosomal subunit protein uL14</fullName>
    </recommendedName>
    <alternativeName>
        <fullName evidence="2">50S ribosomal protein L14</fullName>
    </alternativeName>
</protein>
<accession>Q81VS0</accession>
<accession>Q6I4S4</accession>
<accession>Q6KYH0</accession>
<proteinExistence type="inferred from homology"/>
<feature type="chain" id="PRO_1000055510" description="Large ribosomal subunit protein uL14">
    <location>
        <begin position="1"/>
        <end position="122"/>
    </location>
</feature>
<dbReference type="EMBL" id="AE016879">
    <property type="protein sequence ID" value="AAP24174.1"/>
    <property type="molecule type" value="Genomic_DNA"/>
</dbReference>
<dbReference type="EMBL" id="AE017334">
    <property type="protein sequence ID" value="AAT29200.1"/>
    <property type="molecule type" value="Genomic_DNA"/>
</dbReference>
<dbReference type="EMBL" id="AE017225">
    <property type="protein sequence ID" value="AAT52457.1"/>
    <property type="molecule type" value="Genomic_DNA"/>
</dbReference>
<dbReference type="RefSeq" id="NP_842688.1">
    <property type="nucleotide sequence ID" value="NC_003997.3"/>
</dbReference>
<dbReference type="RefSeq" id="WP_000615912.1">
    <property type="nucleotide sequence ID" value="NZ_WXXJ01000051.1"/>
</dbReference>
<dbReference type="RefSeq" id="YP_026406.1">
    <property type="nucleotide sequence ID" value="NC_005945.1"/>
</dbReference>
<dbReference type="SMR" id="Q81VS0"/>
<dbReference type="STRING" id="261594.GBAA_0120"/>
<dbReference type="DNASU" id="1087270"/>
<dbReference type="GeneID" id="93010933"/>
<dbReference type="KEGG" id="ban:BA_0120"/>
<dbReference type="KEGG" id="bar:GBAA_0120"/>
<dbReference type="KEGG" id="bat:BAS0120"/>
<dbReference type="PATRIC" id="fig|198094.11.peg.117"/>
<dbReference type="eggNOG" id="COG0093">
    <property type="taxonomic scope" value="Bacteria"/>
</dbReference>
<dbReference type="HOGENOM" id="CLU_095071_2_1_9"/>
<dbReference type="OMA" id="MIQMQTR"/>
<dbReference type="OrthoDB" id="9806379at2"/>
<dbReference type="Proteomes" id="UP000000427">
    <property type="component" value="Chromosome"/>
</dbReference>
<dbReference type="Proteomes" id="UP000000594">
    <property type="component" value="Chromosome"/>
</dbReference>
<dbReference type="GO" id="GO:0022625">
    <property type="term" value="C:cytosolic large ribosomal subunit"/>
    <property type="evidence" value="ECO:0007669"/>
    <property type="project" value="TreeGrafter"/>
</dbReference>
<dbReference type="GO" id="GO:0070180">
    <property type="term" value="F:large ribosomal subunit rRNA binding"/>
    <property type="evidence" value="ECO:0007669"/>
    <property type="project" value="TreeGrafter"/>
</dbReference>
<dbReference type="GO" id="GO:0003735">
    <property type="term" value="F:structural constituent of ribosome"/>
    <property type="evidence" value="ECO:0007669"/>
    <property type="project" value="InterPro"/>
</dbReference>
<dbReference type="GO" id="GO:0006412">
    <property type="term" value="P:translation"/>
    <property type="evidence" value="ECO:0007669"/>
    <property type="project" value="UniProtKB-UniRule"/>
</dbReference>
<dbReference type="CDD" id="cd00337">
    <property type="entry name" value="Ribosomal_uL14"/>
    <property type="match status" value="1"/>
</dbReference>
<dbReference type="FunFam" id="2.40.150.20:FF:000001">
    <property type="entry name" value="50S ribosomal protein L14"/>
    <property type="match status" value="1"/>
</dbReference>
<dbReference type="Gene3D" id="2.40.150.20">
    <property type="entry name" value="Ribosomal protein L14"/>
    <property type="match status" value="1"/>
</dbReference>
<dbReference type="HAMAP" id="MF_01367">
    <property type="entry name" value="Ribosomal_uL14"/>
    <property type="match status" value="1"/>
</dbReference>
<dbReference type="InterPro" id="IPR000218">
    <property type="entry name" value="Ribosomal_uL14"/>
</dbReference>
<dbReference type="InterPro" id="IPR005745">
    <property type="entry name" value="Ribosomal_uL14_bac-type"/>
</dbReference>
<dbReference type="InterPro" id="IPR019972">
    <property type="entry name" value="Ribosomal_uL14_CS"/>
</dbReference>
<dbReference type="InterPro" id="IPR036853">
    <property type="entry name" value="Ribosomal_uL14_sf"/>
</dbReference>
<dbReference type="NCBIfam" id="TIGR01067">
    <property type="entry name" value="rplN_bact"/>
    <property type="match status" value="1"/>
</dbReference>
<dbReference type="PANTHER" id="PTHR11761">
    <property type="entry name" value="50S/60S RIBOSOMAL PROTEIN L14/L23"/>
    <property type="match status" value="1"/>
</dbReference>
<dbReference type="PANTHER" id="PTHR11761:SF3">
    <property type="entry name" value="LARGE RIBOSOMAL SUBUNIT PROTEIN UL14M"/>
    <property type="match status" value="1"/>
</dbReference>
<dbReference type="Pfam" id="PF00238">
    <property type="entry name" value="Ribosomal_L14"/>
    <property type="match status" value="1"/>
</dbReference>
<dbReference type="SMART" id="SM01374">
    <property type="entry name" value="Ribosomal_L14"/>
    <property type="match status" value="1"/>
</dbReference>
<dbReference type="SUPFAM" id="SSF50193">
    <property type="entry name" value="Ribosomal protein L14"/>
    <property type="match status" value="1"/>
</dbReference>
<dbReference type="PROSITE" id="PS00049">
    <property type="entry name" value="RIBOSOMAL_L14"/>
    <property type="match status" value="1"/>
</dbReference>
<reference key="1">
    <citation type="journal article" date="2003" name="Nature">
        <title>The genome sequence of Bacillus anthracis Ames and comparison to closely related bacteria.</title>
        <authorList>
            <person name="Read T.D."/>
            <person name="Peterson S.N."/>
            <person name="Tourasse N.J."/>
            <person name="Baillie L.W."/>
            <person name="Paulsen I.T."/>
            <person name="Nelson K.E."/>
            <person name="Tettelin H."/>
            <person name="Fouts D.E."/>
            <person name="Eisen J.A."/>
            <person name="Gill S.R."/>
            <person name="Holtzapple E.K."/>
            <person name="Okstad O.A."/>
            <person name="Helgason E."/>
            <person name="Rilstone J."/>
            <person name="Wu M."/>
            <person name="Kolonay J.F."/>
            <person name="Beanan M.J."/>
            <person name="Dodson R.J."/>
            <person name="Brinkac L.M."/>
            <person name="Gwinn M.L."/>
            <person name="DeBoy R.T."/>
            <person name="Madpu R."/>
            <person name="Daugherty S.C."/>
            <person name="Durkin A.S."/>
            <person name="Haft D.H."/>
            <person name="Nelson W.C."/>
            <person name="Peterson J.D."/>
            <person name="Pop M."/>
            <person name="Khouri H.M."/>
            <person name="Radune D."/>
            <person name="Benton J.L."/>
            <person name="Mahamoud Y."/>
            <person name="Jiang L."/>
            <person name="Hance I.R."/>
            <person name="Weidman J.F."/>
            <person name="Berry K.J."/>
            <person name="Plaut R.D."/>
            <person name="Wolf A.M."/>
            <person name="Watkins K.L."/>
            <person name="Nierman W.C."/>
            <person name="Hazen A."/>
            <person name="Cline R.T."/>
            <person name="Redmond C."/>
            <person name="Thwaite J.E."/>
            <person name="White O."/>
            <person name="Salzberg S.L."/>
            <person name="Thomason B."/>
            <person name="Friedlander A.M."/>
            <person name="Koehler T.M."/>
            <person name="Hanna P.C."/>
            <person name="Kolstoe A.-B."/>
            <person name="Fraser C.M."/>
        </authorList>
    </citation>
    <scope>NUCLEOTIDE SEQUENCE [LARGE SCALE GENOMIC DNA]</scope>
    <source>
        <strain>Ames / isolate Porton</strain>
    </source>
</reference>
<reference key="2">
    <citation type="submission" date="2004-01" db="EMBL/GenBank/DDBJ databases">
        <title>Complete genome sequence of Bacillus anthracis Sterne.</title>
        <authorList>
            <person name="Brettin T.S."/>
            <person name="Bruce D."/>
            <person name="Challacombe J.F."/>
            <person name="Gilna P."/>
            <person name="Han C."/>
            <person name="Hill K."/>
            <person name="Hitchcock P."/>
            <person name="Jackson P."/>
            <person name="Keim P."/>
            <person name="Longmire J."/>
            <person name="Lucas S."/>
            <person name="Okinaka R."/>
            <person name="Richardson P."/>
            <person name="Rubin E."/>
            <person name="Tice H."/>
        </authorList>
    </citation>
    <scope>NUCLEOTIDE SEQUENCE [LARGE SCALE GENOMIC DNA]</scope>
    <source>
        <strain>Sterne</strain>
    </source>
</reference>
<reference key="3">
    <citation type="journal article" date="2009" name="J. Bacteriol.">
        <title>The complete genome sequence of Bacillus anthracis Ames 'Ancestor'.</title>
        <authorList>
            <person name="Ravel J."/>
            <person name="Jiang L."/>
            <person name="Stanley S.T."/>
            <person name="Wilson M.R."/>
            <person name="Decker R.S."/>
            <person name="Read T.D."/>
            <person name="Worsham P."/>
            <person name="Keim P.S."/>
            <person name="Salzberg S.L."/>
            <person name="Fraser-Liggett C.M."/>
            <person name="Rasko D.A."/>
        </authorList>
    </citation>
    <scope>NUCLEOTIDE SEQUENCE [LARGE SCALE GENOMIC DNA]</scope>
    <source>
        <strain>Ames ancestor</strain>
    </source>
</reference>
<keyword id="KW-1185">Reference proteome</keyword>
<keyword id="KW-0687">Ribonucleoprotein</keyword>
<keyword id="KW-0689">Ribosomal protein</keyword>
<keyword id="KW-0694">RNA-binding</keyword>
<keyword id="KW-0699">rRNA-binding</keyword>